<evidence type="ECO:0000255" key="1">
    <source>
        <dbReference type="HAMAP-Rule" id="MF_01693"/>
    </source>
</evidence>
<accession>Q324B6</accession>
<protein>
    <recommendedName>
        <fullName evidence="1">8-amino-7-oxononanoate synthase</fullName>
        <shortName evidence="1">AONS</shortName>
        <ecNumber evidence="1">2.3.1.47</ecNumber>
    </recommendedName>
    <alternativeName>
        <fullName evidence="1">7-keto-8-amino-pelargonic acid synthase</fullName>
        <shortName evidence="1">7-KAP synthase</shortName>
        <shortName evidence="1">KAPA synthase</shortName>
    </alternativeName>
    <alternativeName>
        <fullName evidence="1">8-amino-7-ketopelargonate synthase</fullName>
    </alternativeName>
</protein>
<sequence>MSWQEKINAALDARRAADALRRRYPVAQGAGRWLVADDRQYLNFSSNDYLGLSHHPQIIRAWQQGAEQFGVGSGGSGHVSGYSVAHQALEEELAEWLGYSRALLFISGFAANQAVIAAMMAKEDRIVADRLSHASLLEAASLSPSQLRRFVHNDVTHLARLLASPCPGQQLVVTEGVFSMDGDSAPLAEIQQVTQQHNGWLMVDDAHGTGVIGEQGRGSCWLQKVKPELLVVTFGKGFGVSGAAVLCSSTVADYLLQFARHLIYNTSMPPAQAQALRASLAVIRRDEGDARREKLVSLIARFRAGVQDLPFTLADSCSAIQPLIVGDNSRALQLAEKLRQQGCWVTAIRPPTVPAGTARLRLTLTAAHEMQDIDRLLEVLHGNG</sequence>
<organism>
    <name type="scientific">Shigella boydii serotype 4 (strain Sb227)</name>
    <dbReference type="NCBI Taxonomy" id="300268"/>
    <lineage>
        <taxon>Bacteria</taxon>
        <taxon>Pseudomonadati</taxon>
        <taxon>Pseudomonadota</taxon>
        <taxon>Gammaproteobacteria</taxon>
        <taxon>Enterobacterales</taxon>
        <taxon>Enterobacteriaceae</taxon>
        <taxon>Shigella</taxon>
    </lineage>
</organism>
<reference key="1">
    <citation type="journal article" date="2005" name="Nucleic Acids Res.">
        <title>Genome dynamics and diversity of Shigella species, the etiologic agents of bacillary dysentery.</title>
        <authorList>
            <person name="Yang F."/>
            <person name="Yang J."/>
            <person name="Zhang X."/>
            <person name="Chen L."/>
            <person name="Jiang Y."/>
            <person name="Yan Y."/>
            <person name="Tang X."/>
            <person name="Wang J."/>
            <person name="Xiong Z."/>
            <person name="Dong J."/>
            <person name="Xue Y."/>
            <person name="Zhu Y."/>
            <person name="Xu X."/>
            <person name="Sun L."/>
            <person name="Chen S."/>
            <person name="Nie H."/>
            <person name="Peng J."/>
            <person name="Xu J."/>
            <person name="Wang Y."/>
            <person name="Yuan Z."/>
            <person name="Wen Y."/>
            <person name="Yao Z."/>
            <person name="Shen Y."/>
            <person name="Qiang B."/>
            <person name="Hou Y."/>
            <person name="Yu J."/>
            <person name="Jin Q."/>
        </authorList>
    </citation>
    <scope>NUCLEOTIDE SEQUENCE [LARGE SCALE GENOMIC DNA]</scope>
    <source>
        <strain>Sb227</strain>
    </source>
</reference>
<proteinExistence type="inferred from homology"/>
<dbReference type="EC" id="2.3.1.47" evidence="1"/>
<dbReference type="EMBL" id="CP000036">
    <property type="protein sequence ID" value="ABB65342.1"/>
    <property type="molecule type" value="Genomic_DNA"/>
</dbReference>
<dbReference type="RefSeq" id="WP_000118842.1">
    <property type="nucleotide sequence ID" value="NC_007613.1"/>
</dbReference>
<dbReference type="SMR" id="Q324B6"/>
<dbReference type="KEGG" id="sbo:SBO_0663"/>
<dbReference type="HOGENOM" id="CLU_015846_11_2_6"/>
<dbReference type="UniPathway" id="UPA00078"/>
<dbReference type="Proteomes" id="UP000007067">
    <property type="component" value="Chromosome"/>
</dbReference>
<dbReference type="GO" id="GO:0008710">
    <property type="term" value="F:8-amino-7-oxononanoate synthase activity"/>
    <property type="evidence" value="ECO:0007669"/>
    <property type="project" value="UniProtKB-UniRule"/>
</dbReference>
<dbReference type="GO" id="GO:0030170">
    <property type="term" value="F:pyridoxal phosphate binding"/>
    <property type="evidence" value="ECO:0007669"/>
    <property type="project" value="UniProtKB-UniRule"/>
</dbReference>
<dbReference type="GO" id="GO:0009102">
    <property type="term" value="P:biotin biosynthetic process"/>
    <property type="evidence" value="ECO:0007669"/>
    <property type="project" value="UniProtKB-UniRule"/>
</dbReference>
<dbReference type="CDD" id="cd06454">
    <property type="entry name" value="KBL_like"/>
    <property type="match status" value="1"/>
</dbReference>
<dbReference type="FunFam" id="3.40.640.10:FF:000095">
    <property type="entry name" value="8-amino-7-oxononanoate synthase"/>
    <property type="match status" value="1"/>
</dbReference>
<dbReference type="FunFam" id="3.90.1150.10:FF:000036">
    <property type="entry name" value="8-amino-7-oxononanoate synthase"/>
    <property type="match status" value="1"/>
</dbReference>
<dbReference type="Gene3D" id="3.90.1150.10">
    <property type="entry name" value="Aspartate Aminotransferase, domain 1"/>
    <property type="match status" value="1"/>
</dbReference>
<dbReference type="Gene3D" id="3.40.640.10">
    <property type="entry name" value="Type I PLP-dependent aspartate aminotransferase-like (Major domain)"/>
    <property type="match status" value="1"/>
</dbReference>
<dbReference type="HAMAP" id="MF_01693">
    <property type="entry name" value="BioF_aminotrans_2"/>
    <property type="match status" value="1"/>
</dbReference>
<dbReference type="InterPro" id="IPR001917">
    <property type="entry name" value="Aminotrans_II_pyridoxalP_BS"/>
</dbReference>
<dbReference type="InterPro" id="IPR004839">
    <property type="entry name" value="Aminotransferase_I/II_large"/>
</dbReference>
<dbReference type="InterPro" id="IPR050087">
    <property type="entry name" value="AON_synthase_class-II"/>
</dbReference>
<dbReference type="InterPro" id="IPR004723">
    <property type="entry name" value="AONS_Archaea/Proteobacteria"/>
</dbReference>
<dbReference type="InterPro" id="IPR022834">
    <property type="entry name" value="AONS_Proteobacteria"/>
</dbReference>
<dbReference type="InterPro" id="IPR015424">
    <property type="entry name" value="PyrdxlP-dep_Trfase"/>
</dbReference>
<dbReference type="InterPro" id="IPR015421">
    <property type="entry name" value="PyrdxlP-dep_Trfase_major"/>
</dbReference>
<dbReference type="InterPro" id="IPR015422">
    <property type="entry name" value="PyrdxlP-dep_Trfase_small"/>
</dbReference>
<dbReference type="NCBIfam" id="TIGR00858">
    <property type="entry name" value="bioF"/>
    <property type="match status" value="1"/>
</dbReference>
<dbReference type="PANTHER" id="PTHR13693:SF100">
    <property type="entry name" value="8-AMINO-7-OXONONANOATE SYNTHASE"/>
    <property type="match status" value="1"/>
</dbReference>
<dbReference type="PANTHER" id="PTHR13693">
    <property type="entry name" value="CLASS II AMINOTRANSFERASE/8-AMINO-7-OXONONANOATE SYNTHASE"/>
    <property type="match status" value="1"/>
</dbReference>
<dbReference type="Pfam" id="PF00155">
    <property type="entry name" value="Aminotran_1_2"/>
    <property type="match status" value="1"/>
</dbReference>
<dbReference type="SUPFAM" id="SSF53383">
    <property type="entry name" value="PLP-dependent transferases"/>
    <property type="match status" value="1"/>
</dbReference>
<dbReference type="PROSITE" id="PS00599">
    <property type="entry name" value="AA_TRANSFER_CLASS_2"/>
    <property type="match status" value="1"/>
</dbReference>
<name>BIOF_SHIBS</name>
<feature type="chain" id="PRO_0000381109" description="8-amino-7-oxononanoate synthase">
    <location>
        <begin position="1"/>
        <end position="384"/>
    </location>
</feature>
<feature type="binding site" evidence="1">
    <location>
        <position position="21"/>
    </location>
    <ligand>
        <name>substrate</name>
    </ligand>
</feature>
<feature type="binding site" evidence="1">
    <location>
        <begin position="108"/>
        <end position="109"/>
    </location>
    <ligand>
        <name>pyridoxal 5'-phosphate</name>
        <dbReference type="ChEBI" id="CHEBI:597326"/>
    </ligand>
</feature>
<feature type="binding site" evidence="1">
    <location>
        <position position="133"/>
    </location>
    <ligand>
        <name>substrate</name>
    </ligand>
</feature>
<feature type="binding site" evidence="1">
    <location>
        <position position="179"/>
    </location>
    <ligand>
        <name>pyridoxal 5'-phosphate</name>
        <dbReference type="ChEBI" id="CHEBI:597326"/>
    </ligand>
</feature>
<feature type="binding site" evidence="1">
    <location>
        <position position="207"/>
    </location>
    <ligand>
        <name>pyridoxal 5'-phosphate</name>
        <dbReference type="ChEBI" id="CHEBI:597326"/>
    </ligand>
</feature>
<feature type="binding site" evidence="1">
    <location>
        <position position="233"/>
    </location>
    <ligand>
        <name>pyridoxal 5'-phosphate</name>
        <dbReference type="ChEBI" id="CHEBI:597326"/>
    </ligand>
</feature>
<feature type="binding site" evidence="1">
    <location>
        <position position="352"/>
    </location>
    <ligand>
        <name>substrate</name>
    </ligand>
</feature>
<feature type="modified residue" description="N6-(pyridoxal phosphate)lysine" evidence="1">
    <location>
        <position position="236"/>
    </location>
</feature>
<gene>
    <name evidence="1" type="primary">bioF</name>
    <name type="ordered locus">SBO_0663</name>
</gene>
<keyword id="KW-0093">Biotin biosynthesis</keyword>
<keyword id="KW-0663">Pyridoxal phosphate</keyword>
<keyword id="KW-0808">Transferase</keyword>
<comment type="function">
    <text evidence="1">Catalyzes the decarboxylative condensation of pimeloyl-[acyl-carrier protein] and L-alanine to produce 8-amino-7-oxononanoate (AON), [acyl-carrier protein], and carbon dioxide.</text>
</comment>
<comment type="catalytic activity">
    <reaction evidence="1">
        <text>6-carboxyhexanoyl-[ACP] + L-alanine + H(+) = (8S)-8-amino-7-oxononanoate + holo-[ACP] + CO2</text>
        <dbReference type="Rhea" id="RHEA:42288"/>
        <dbReference type="Rhea" id="RHEA-COMP:9685"/>
        <dbReference type="Rhea" id="RHEA-COMP:9955"/>
        <dbReference type="ChEBI" id="CHEBI:15378"/>
        <dbReference type="ChEBI" id="CHEBI:16526"/>
        <dbReference type="ChEBI" id="CHEBI:57972"/>
        <dbReference type="ChEBI" id="CHEBI:64479"/>
        <dbReference type="ChEBI" id="CHEBI:78846"/>
        <dbReference type="ChEBI" id="CHEBI:149468"/>
        <dbReference type="EC" id="2.3.1.47"/>
    </reaction>
</comment>
<comment type="cofactor">
    <cofactor evidence="1">
        <name>pyridoxal 5'-phosphate</name>
        <dbReference type="ChEBI" id="CHEBI:597326"/>
    </cofactor>
</comment>
<comment type="pathway">
    <text evidence="1">Cofactor biosynthesis; biotin biosynthesis.</text>
</comment>
<comment type="subunit">
    <text evidence="1">Homodimer.</text>
</comment>
<comment type="similarity">
    <text evidence="1">Belongs to the class-II pyridoxal-phosphate-dependent aminotransferase family. BioF subfamily.</text>
</comment>